<reference key="1">
    <citation type="journal article" date="2008" name="J. Bacteriol.">
        <title>Complete genome sequence of the mosquitocidal bacterium Bacillus sphaericus C3-41 and comparison with those of closely related Bacillus species.</title>
        <authorList>
            <person name="Hu X."/>
            <person name="Fan W."/>
            <person name="Han B."/>
            <person name="Liu H."/>
            <person name="Zheng D."/>
            <person name="Li Q."/>
            <person name="Dong W."/>
            <person name="Yan J."/>
            <person name="Gao M."/>
            <person name="Berry C."/>
            <person name="Yuan Z."/>
        </authorList>
    </citation>
    <scope>NUCLEOTIDE SEQUENCE [LARGE SCALE GENOMIC DNA]</scope>
    <source>
        <strain>C3-41</strain>
    </source>
</reference>
<protein>
    <recommendedName>
        <fullName evidence="1">Small ribosomal subunit protein uS15</fullName>
    </recommendedName>
    <alternativeName>
        <fullName evidence="2">30S ribosomal protein S15</fullName>
    </alternativeName>
</protein>
<sequence length="89" mass="10578">MAITKERKNEIIAEYRTHESDTGSPEVQVAVLTAEINALNTHLRTHKKDFHSERGLLKMVGRRRHLLKYLRETDVQRYRELINRLGLRR</sequence>
<proteinExistence type="inferred from homology"/>
<gene>
    <name evidence="1" type="primary">rpsO</name>
    <name type="ordered locus">Bsph_1603</name>
</gene>
<feature type="chain" id="PRO_1000143137" description="Small ribosomal subunit protein uS15">
    <location>
        <begin position="1"/>
        <end position="89"/>
    </location>
</feature>
<name>RS15_LYSSC</name>
<keyword id="KW-0687">Ribonucleoprotein</keyword>
<keyword id="KW-0689">Ribosomal protein</keyword>
<keyword id="KW-0694">RNA-binding</keyword>
<keyword id="KW-0699">rRNA-binding</keyword>
<comment type="function">
    <text evidence="1">One of the primary rRNA binding proteins, it binds directly to 16S rRNA where it helps nucleate assembly of the platform of the 30S subunit by binding and bridging several RNA helices of the 16S rRNA.</text>
</comment>
<comment type="function">
    <text evidence="1">Forms an intersubunit bridge (bridge B4) with the 23S rRNA of the 50S subunit in the ribosome.</text>
</comment>
<comment type="subunit">
    <text evidence="1">Part of the 30S ribosomal subunit. Forms a bridge to the 50S subunit in the 70S ribosome, contacting the 23S rRNA.</text>
</comment>
<comment type="similarity">
    <text evidence="1">Belongs to the universal ribosomal protein uS15 family.</text>
</comment>
<evidence type="ECO:0000255" key="1">
    <source>
        <dbReference type="HAMAP-Rule" id="MF_01343"/>
    </source>
</evidence>
<evidence type="ECO:0000305" key="2"/>
<organism>
    <name type="scientific">Lysinibacillus sphaericus (strain C3-41)</name>
    <dbReference type="NCBI Taxonomy" id="444177"/>
    <lineage>
        <taxon>Bacteria</taxon>
        <taxon>Bacillati</taxon>
        <taxon>Bacillota</taxon>
        <taxon>Bacilli</taxon>
        <taxon>Bacillales</taxon>
        <taxon>Bacillaceae</taxon>
        <taxon>Lysinibacillus</taxon>
    </lineage>
</organism>
<accession>B1HR10</accession>
<dbReference type="EMBL" id="CP000817">
    <property type="protein sequence ID" value="ACA39201.1"/>
    <property type="molecule type" value="Genomic_DNA"/>
</dbReference>
<dbReference type="RefSeq" id="WP_008178982.1">
    <property type="nucleotide sequence ID" value="NC_010382.1"/>
</dbReference>
<dbReference type="SMR" id="B1HR10"/>
<dbReference type="EnsemblBacteria" id="ACA39201">
    <property type="protein sequence ID" value="ACA39201"/>
    <property type="gene ID" value="Bsph_1603"/>
</dbReference>
<dbReference type="GeneID" id="48278017"/>
<dbReference type="KEGG" id="lsp:Bsph_1603"/>
<dbReference type="HOGENOM" id="CLU_148518_0_0_9"/>
<dbReference type="Proteomes" id="UP000002164">
    <property type="component" value="Chromosome"/>
</dbReference>
<dbReference type="GO" id="GO:0022627">
    <property type="term" value="C:cytosolic small ribosomal subunit"/>
    <property type="evidence" value="ECO:0007669"/>
    <property type="project" value="TreeGrafter"/>
</dbReference>
<dbReference type="GO" id="GO:0019843">
    <property type="term" value="F:rRNA binding"/>
    <property type="evidence" value="ECO:0007669"/>
    <property type="project" value="UniProtKB-UniRule"/>
</dbReference>
<dbReference type="GO" id="GO:0003735">
    <property type="term" value="F:structural constituent of ribosome"/>
    <property type="evidence" value="ECO:0007669"/>
    <property type="project" value="InterPro"/>
</dbReference>
<dbReference type="GO" id="GO:0006412">
    <property type="term" value="P:translation"/>
    <property type="evidence" value="ECO:0007669"/>
    <property type="project" value="UniProtKB-UniRule"/>
</dbReference>
<dbReference type="CDD" id="cd00353">
    <property type="entry name" value="Ribosomal_S15p_S13e"/>
    <property type="match status" value="1"/>
</dbReference>
<dbReference type="FunFam" id="1.10.287.10:FF:000002">
    <property type="entry name" value="30S ribosomal protein S15"/>
    <property type="match status" value="1"/>
</dbReference>
<dbReference type="Gene3D" id="6.10.250.3130">
    <property type="match status" value="1"/>
</dbReference>
<dbReference type="Gene3D" id="1.10.287.10">
    <property type="entry name" value="S15/NS1, RNA-binding"/>
    <property type="match status" value="1"/>
</dbReference>
<dbReference type="HAMAP" id="MF_01343_B">
    <property type="entry name" value="Ribosomal_uS15_B"/>
    <property type="match status" value="1"/>
</dbReference>
<dbReference type="InterPro" id="IPR000589">
    <property type="entry name" value="Ribosomal_uS15"/>
</dbReference>
<dbReference type="InterPro" id="IPR005290">
    <property type="entry name" value="Ribosomal_uS15_bac-type"/>
</dbReference>
<dbReference type="InterPro" id="IPR009068">
    <property type="entry name" value="uS15_NS1_RNA-bd_sf"/>
</dbReference>
<dbReference type="NCBIfam" id="TIGR00952">
    <property type="entry name" value="S15_bact"/>
    <property type="match status" value="1"/>
</dbReference>
<dbReference type="PANTHER" id="PTHR23321">
    <property type="entry name" value="RIBOSOMAL PROTEIN S15, BACTERIAL AND ORGANELLAR"/>
    <property type="match status" value="1"/>
</dbReference>
<dbReference type="PANTHER" id="PTHR23321:SF26">
    <property type="entry name" value="SMALL RIBOSOMAL SUBUNIT PROTEIN US15M"/>
    <property type="match status" value="1"/>
</dbReference>
<dbReference type="Pfam" id="PF00312">
    <property type="entry name" value="Ribosomal_S15"/>
    <property type="match status" value="1"/>
</dbReference>
<dbReference type="SMART" id="SM01387">
    <property type="entry name" value="Ribosomal_S15"/>
    <property type="match status" value="1"/>
</dbReference>
<dbReference type="SUPFAM" id="SSF47060">
    <property type="entry name" value="S15/NS1 RNA-binding domain"/>
    <property type="match status" value="1"/>
</dbReference>
<dbReference type="PROSITE" id="PS00362">
    <property type="entry name" value="RIBOSOMAL_S15"/>
    <property type="match status" value="1"/>
</dbReference>